<proteinExistence type="evidence at transcript level"/>
<protein>
    <recommendedName>
        <fullName>Urokinase plasminogen activator surface receptor</fullName>
        <shortName>U-PAR</shortName>
        <shortName>uPAR</shortName>
    </recommendedName>
    <cdAntigenName>CD87</cdAntigenName>
</protein>
<evidence type="ECO:0000250" key="1"/>
<evidence type="ECO:0000250" key="2">
    <source>
        <dbReference type="UniProtKB" id="Q03405"/>
    </source>
</evidence>
<evidence type="ECO:0000255" key="3"/>
<evidence type="ECO:0000269" key="4">
    <source>
    </source>
</evidence>
<evidence type="ECO:0000303" key="5">
    <source>
    </source>
</evidence>
<evidence type="ECO:0000305" key="6"/>
<evidence type="ECO:0000305" key="7">
    <source>
    </source>
</evidence>
<name>UPAR_RAT</name>
<gene>
    <name type="primary">Plaur</name>
</gene>
<dbReference type="EMBL" id="X71898">
    <property type="protein sequence ID" value="CAA50717.1"/>
    <property type="status" value="ALT_FRAME"/>
    <property type="molecule type" value="mRNA"/>
</dbReference>
<dbReference type="EMBL" id="X71899">
    <property type="protein sequence ID" value="CAA50718.1"/>
    <property type="status" value="ALT_FRAME"/>
    <property type="molecule type" value="mRNA"/>
</dbReference>
<dbReference type="EMBL" id="X76129">
    <property type="protein sequence ID" value="CAA53732.1"/>
    <property type="molecule type" value="Genomic_DNA"/>
</dbReference>
<dbReference type="EMBL" id="AF007789">
    <property type="protein sequence ID" value="AAB62974.1"/>
    <property type="molecule type" value="mRNA"/>
</dbReference>
<dbReference type="EMBL" id="BC127499">
    <property type="protein sequence ID" value="AAI27500.1"/>
    <property type="molecule type" value="mRNA"/>
</dbReference>
<dbReference type="PIR" id="S42152">
    <property type="entry name" value="S42152"/>
</dbReference>
<dbReference type="PIR" id="S42429">
    <property type="entry name" value="S42429"/>
</dbReference>
<dbReference type="RefSeq" id="NP_059046.1">
    <property type="nucleotide sequence ID" value="NM_017350.1"/>
</dbReference>
<dbReference type="RefSeq" id="NP_599179.2">
    <molecule id="P49616-1"/>
    <property type="nucleotide sequence ID" value="NM_134352.2"/>
</dbReference>
<dbReference type="SMR" id="P49616"/>
<dbReference type="FunCoup" id="P49616">
    <property type="interactions" value="272"/>
</dbReference>
<dbReference type="IntAct" id="P49616">
    <property type="interactions" value="1"/>
</dbReference>
<dbReference type="STRING" id="10116.ENSRNOP00000063960"/>
<dbReference type="BindingDB" id="P49616"/>
<dbReference type="ChEMBL" id="CHEMBL3638329"/>
<dbReference type="GlyCosmos" id="P49616">
    <property type="glycosylation" value="7 sites, No reported glycans"/>
</dbReference>
<dbReference type="GlyGen" id="P49616">
    <property type="glycosylation" value="7 sites"/>
</dbReference>
<dbReference type="PhosphoSitePlus" id="P49616"/>
<dbReference type="PaxDb" id="10116-ENSRNOP00000063960"/>
<dbReference type="GeneID" id="50692"/>
<dbReference type="KEGG" id="rno:50692"/>
<dbReference type="AGR" id="RGD:620597"/>
<dbReference type="CTD" id="5329"/>
<dbReference type="RGD" id="620597">
    <property type="gene designation" value="Plaur"/>
</dbReference>
<dbReference type="eggNOG" id="ENOG502S36D">
    <property type="taxonomic scope" value="Eukaryota"/>
</dbReference>
<dbReference type="InParanoid" id="P49616"/>
<dbReference type="PhylomeDB" id="P49616"/>
<dbReference type="Reactome" id="R-RNO-162791">
    <property type="pathway name" value="Attachment of GPI anchor to uPAR"/>
</dbReference>
<dbReference type="Reactome" id="R-RNO-6798695">
    <property type="pathway name" value="Neutrophil degranulation"/>
</dbReference>
<dbReference type="Reactome" id="R-RNO-75205">
    <property type="pathway name" value="Dissolution of Fibrin Clot"/>
</dbReference>
<dbReference type="PRO" id="PR:P49616"/>
<dbReference type="Proteomes" id="UP000002494">
    <property type="component" value="Unplaced"/>
</dbReference>
<dbReference type="GO" id="GO:0009986">
    <property type="term" value="C:cell surface"/>
    <property type="evidence" value="ECO:0000266"/>
    <property type="project" value="RGD"/>
</dbReference>
<dbReference type="GO" id="GO:0005576">
    <property type="term" value="C:extracellular region"/>
    <property type="evidence" value="ECO:0007669"/>
    <property type="project" value="UniProtKB-SubCell"/>
</dbReference>
<dbReference type="GO" id="GO:0005886">
    <property type="term" value="C:plasma membrane"/>
    <property type="evidence" value="ECO:0000266"/>
    <property type="project" value="RGD"/>
</dbReference>
<dbReference type="GO" id="GO:0098637">
    <property type="term" value="C:protein complex involved in cell-matrix adhesion"/>
    <property type="evidence" value="ECO:0000266"/>
    <property type="project" value="RGD"/>
</dbReference>
<dbReference type="GO" id="GO:1905370">
    <property type="term" value="C:serine-type endopeptidase complex"/>
    <property type="evidence" value="ECO:0000266"/>
    <property type="project" value="RGD"/>
</dbReference>
<dbReference type="GO" id="GO:0098552">
    <property type="term" value="C:side of membrane"/>
    <property type="evidence" value="ECO:0007669"/>
    <property type="project" value="UniProtKB-KW"/>
</dbReference>
<dbReference type="GO" id="GO:0019899">
    <property type="term" value="F:enzyme binding"/>
    <property type="evidence" value="ECO:0000266"/>
    <property type="project" value="RGD"/>
</dbReference>
<dbReference type="GO" id="GO:0019904">
    <property type="term" value="F:protein domain specific binding"/>
    <property type="evidence" value="ECO:0000266"/>
    <property type="project" value="RGD"/>
</dbReference>
<dbReference type="GO" id="GO:0005102">
    <property type="term" value="F:signaling receptor binding"/>
    <property type="evidence" value="ECO:0000266"/>
    <property type="project" value="RGD"/>
</dbReference>
<dbReference type="GO" id="GO:0030377">
    <property type="term" value="F:urokinase plasminogen activator receptor activity"/>
    <property type="evidence" value="ECO:0000304"/>
    <property type="project" value="RGD"/>
</dbReference>
<dbReference type="GO" id="GO:0060742">
    <property type="term" value="P:epithelial cell differentiation involved in prostate gland development"/>
    <property type="evidence" value="ECO:0000315"/>
    <property type="project" value="RGD"/>
</dbReference>
<dbReference type="GO" id="GO:0048762">
    <property type="term" value="P:mesenchymal cell differentiation"/>
    <property type="evidence" value="ECO:0000315"/>
    <property type="project" value="RGD"/>
</dbReference>
<dbReference type="GO" id="GO:0043066">
    <property type="term" value="P:negative regulation of apoptotic process"/>
    <property type="evidence" value="ECO:0000315"/>
    <property type="project" value="RGD"/>
</dbReference>
<dbReference type="GO" id="GO:2001243">
    <property type="term" value="P:negative regulation of intrinsic apoptotic signaling pathway"/>
    <property type="evidence" value="ECO:0000266"/>
    <property type="project" value="RGD"/>
</dbReference>
<dbReference type="GO" id="GO:0045742">
    <property type="term" value="P:positive regulation of epidermal growth factor receptor signaling pathway"/>
    <property type="evidence" value="ECO:0000266"/>
    <property type="project" value="RGD"/>
</dbReference>
<dbReference type="GO" id="GO:0034112">
    <property type="term" value="P:positive regulation of homotypic cell-cell adhesion"/>
    <property type="evidence" value="ECO:0000266"/>
    <property type="project" value="RGD"/>
</dbReference>
<dbReference type="GO" id="GO:0090200">
    <property type="term" value="P:positive regulation of release of cytochrome c from mitochondria"/>
    <property type="evidence" value="ECO:0000266"/>
    <property type="project" value="RGD"/>
</dbReference>
<dbReference type="GO" id="GO:0030155">
    <property type="term" value="P:regulation of cell adhesion"/>
    <property type="evidence" value="ECO:0000266"/>
    <property type="project" value="RGD"/>
</dbReference>
<dbReference type="GO" id="GO:0043403">
    <property type="term" value="P:skeletal muscle tissue regeneration"/>
    <property type="evidence" value="ECO:0000270"/>
    <property type="project" value="RGD"/>
</dbReference>
<dbReference type="GO" id="GO:0007283">
    <property type="term" value="P:spermatogenesis"/>
    <property type="evidence" value="ECO:0000270"/>
    <property type="project" value="RGD"/>
</dbReference>
<dbReference type="CDD" id="cd23556">
    <property type="entry name" value="TFP_LU_ECD_uPAR_rpt1"/>
    <property type="match status" value="1"/>
</dbReference>
<dbReference type="CDD" id="cd23557">
    <property type="entry name" value="TFP_LU_ECD_uPAR_rpt2"/>
    <property type="match status" value="1"/>
</dbReference>
<dbReference type="CDD" id="cd23558">
    <property type="entry name" value="TFP_LU_ECD_uPAR_rpt3"/>
    <property type="match status" value="1"/>
</dbReference>
<dbReference type="FunFam" id="2.10.60.10:FF:000013">
    <property type="entry name" value="Urokinase plasminogen activator surface receptor"/>
    <property type="match status" value="1"/>
</dbReference>
<dbReference type="FunFam" id="2.10.60.10:FF:000015">
    <property type="entry name" value="Urokinase plasminogen activator surface receptor"/>
    <property type="match status" value="1"/>
</dbReference>
<dbReference type="FunFam" id="2.10.60.10:FF:000019">
    <property type="entry name" value="Urokinase plasminogen activator surface receptor"/>
    <property type="match status" value="1"/>
</dbReference>
<dbReference type="Gene3D" id="2.10.60.10">
    <property type="entry name" value="CD59"/>
    <property type="match status" value="3"/>
</dbReference>
<dbReference type="InterPro" id="IPR018363">
    <property type="entry name" value="CD59_antigen_CS"/>
</dbReference>
<dbReference type="InterPro" id="IPR016054">
    <property type="entry name" value="LY6_UPA_recep-like"/>
</dbReference>
<dbReference type="InterPro" id="IPR045860">
    <property type="entry name" value="Snake_toxin-like_sf"/>
</dbReference>
<dbReference type="PANTHER" id="PTHR10624:SF6">
    <property type="entry name" value="UROKINASE PLASMINOGEN ACTIVATOR SURFACE RECEPTOR"/>
    <property type="match status" value="1"/>
</dbReference>
<dbReference type="PANTHER" id="PTHR10624">
    <property type="entry name" value="UROKINASE PLASMINOGEN ACTIVATOR SURFACE RECEPTOR-RELATED"/>
    <property type="match status" value="1"/>
</dbReference>
<dbReference type="Pfam" id="PF00021">
    <property type="entry name" value="UPAR_LY6"/>
    <property type="match status" value="3"/>
</dbReference>
<dbReference type="SMART" id="SM00134">
    <property type="entry name" value="LU"/>
    <property type="match status" value="3"/>
</dbReference>
<dbReference type="SUPFAM" id="SSF57302">
    <property type="entry name" value="Snake toxin-like"/>
    <property type="match status" value="3"/>
</dbReference>
<dbReference type="PROSITE" id="PS00983">
    <property type="entry name" value="LY6_UPAR"/>
    <property type="match status" value="3"/>
</dbReference>
<feature type="signal peptide" evidence="3">
    <location>
        <begin position="1"/>
        <end position="24"/>
    </location>
</feature>
<feature type="chain" id="PRO_0000036099" description="Urokinase plasminogen activator surface receptor">
    <location>
        <begin position="25"/>
        <end position="299"/>
    </location>
</feature>
<feature type="propeptide" id="PRO_0000036100" description="Removed in mature form" evidence="3">
    <location>
        <begin position="300"/>
        <end position="328"/>
    </location>
</feature>
<feature type="domain" description="UPAR/Ly6 1">
    <location>
        <begin position="25"/>
        <end position="118"/>
    </location>
</feature>
<feature type="domain" description="UPAR/Ly6 2">
    <location>
        <begin position="118"/>
        <end position="213"/>
    </location>
</feature>
<feature type="domain" description="UPAR/Ly6 3">
    <location>
        <begin position="214"/>
        <end position="299"/>
    </location>
</feature>
<feature type="lipid moiety-binding region" description="GPI-anchor amidated glycine" evidence="3">
    <location>
        <position position="299"/>
    </location>
</feature>
<feature type="glycosylation site" description="N-linked (GlcNAc...) asparagine" evidence="3">
    <location>
        <position position="76"/>
    </location>
</feature>
<feature type="glycosylation site" description="N-linked (GlcNAc...) asparagine" evidence="3">
    <location>
        <position position="184"/>
    </location>
</feature>
<feature type="glycosylation site" description="N-linked (GlcNAc...) asparagine" evidence="3">
    <location>
        <position position="194"/>
    </location>
</feature>
<feature type="glycosylation site" description="N-linked (GlcNAc...) asparagine" evidence="3">
    <location>
        <position position="222"/>
    </location>
</feature>
<feature type="glycosylation site" description="N-linked (GlcNAc...) asparagine" evidence="3">
    <location>
        <position position="255"/>
    </location>
</feature>
<feature type="glycosylation site" description="N-linked (GlcNAc...) asparagine" evidence="3">
    <location>
        <position position="283"/>
    </location>
</feature>
<feature type="glycosylation site" description="N-linked (GlcNAc...) asparagine" evidence="3">
    <location>
        <position position="290"/>
    </location>
</feature>
<feature type="disulfide bond" evidence="2">
    <location>
        <begin position="27"/>
        <end position="48"/>
    </location>
</feature>
<feature type="disulfide bond" evidence="2">
    <location>
        <begin position="30"/>
        <end position="36"/>
    </location>
</feature>
<feature type="disulfide bond" evidence="2">
    <location>
        <begin position="41"/>
        <end position="69"/>
    </location>
</feature>
<feature type="disulfide bond" evidence="2">
    <location>
        <begin position="95"/>
        <end position="100"/>
    </location>
</feature>
<feature type="disulfide bond" evidence="2">
    <location>
        <begin position="120"/>
        <end position="147"/>
    </location>
</feature>
<feature type="disulfide bond" evidence="2">
    <location>
        <begin position="123"/>
        <end position="130"/>
    </location>
</feature>
<feature type="disulfide bond" evidence="2">
    <location>
        <begin position="140"/>
        <end position="169"/>
    </location>
</feature>
<feature type="disulfide bond" evidence="2">
    <location>
        <begin position="175"/>
        <end position="192"/>
    </location>
</feature>
<feature type="disulfide bond" evidence="2">
    <location>
        <begin position="193"/>
        <end position="198"/>
    </location>
</feature>
<feature type="disulfide bond" evidence="2">
    <location>
        <begin position="216"/>
        <end position="244"/>
    </location>
</feature>
<feature type="disulfide bond" evidence="2">
    <location>
        <begin position="219"/>
        <end position="227"/>
    </location>
</feature>
<feature type="disulfide bond" evidence="2">
    <location>
        <begin position="237"/>
        <end position="263"/>
    </location>
</feature>
<feature type="disulfide bond" evidence="2">
    <location>
        <begin position="269"/>
        <end position="288"/>
    </location>
</feature>
<feature type="disulfide bond" evidence="2">
    <location>
        <begin position="289"/>
        <end position="294"/>
    </location>
</feature>
<feature type="splice variant" id="VSP_031840" description="In isoform 2." evidence="5">
    <original>SVKDEPYTKGCGSLPGCPGTAGFHSNQTFHFLKCCNFTQCNGGPVLDLQSLPPNGFQCYSCE</original>
    <variation>KLPAAGSPLGCPKEISKFQACKQNSHSHATAHSVPGSSESLDQLESDQELSYLVVSHILLSF</variation>
    <location>
        <begin position="159"/>
        <end position="220"/>
    </location>
</feature>
<feature type="splice variant" id="VSP_031841" description="In isoform 2." evidence="5">
    <location>
        <begin position="221"/>
        <end position="328"/>
    </location>
</feature>
<feature type="sequence variant">
    <original>C</original>
    <variation>S</variation>
    <location>
        <position position="95"/>
    </location>
</feature>
<feature type="sequence conflict" description="In Ref. 1; CAA50718." evidence="6" ref="1">
    <original>TSL</original>
    <variation>SSF</variation>
    <location>
        <begin position="232"/>
        <end position="234"/>
    </location>
</feature>
<reference key="1">
    <citation type="journal article" date="1994" name="FEBS Lett.">
        <title>Isolation and characterization of multiple isoforms of the rat urokinase receptor in osteoblasts.</title>
        <authorList>
            <person name="Rabbani S.A."/>
            <person name="Rajwans N."/>
            <person name="Achbarou A."/>
            <person name="Murthy K.K."/>
            <person name="Goltzman D."/>
        </authorList>
    </citation>
    <scope>NUCLEOTIDE SEQUENCE [MRNA] (ISOFORMS 1 AND 2)</scope>
    <scope>SUBCELLULAR LOCATION</scope>
    <source>
        <tissue>Osteoblast</tissue>
    </source>
</reference>
<reference key="2">
    <citation type="submission" date="1997-06" db="EMBL/GenBank/DDBJ databases">
        <authorList>
            <person name="DeYoung M.B."/>
            <person name="Wohlgemuth J."/>
            <person name="Dichek D.A."/>
        </authorList>
    </citation>
    <scope>NUCLEOTIDE SEQUENCE [MRNA] (ISOFORM 1)</scope>
    <source>
        <strain>Sprague-Dawley</strain>
        <tissue>Aortic smooth muscle</tissue>
    </source>
</reference>
<reference key="3">
    <citation type="journal article" date="2004" name="Genome Res.">
        <title>The status, quality, and expansion of the NIH full-length cDNA project: the Mammalian Gene Collection (MGC).</title>
        <authorList>
            <consortium name="The MGC Project Team"/>
        </authorList>
    </citation>
    <scope>NUCLEOTIDE SEQUENCE [LARGE SCALE MRNA] (ISOFORM 1)</scope>
    <source>
        <tissue>Thymus</tissue>
    </source>
</reference>
<reference key="4">
    <citation type="journal article" date="1992" name="FEBS Lett.">
        <title>The receptor for the plasminogen activator of urokinase type is up-regulated in transformed rat thyroid cells.</title>
        <authorList>
            <person name="Ragno P."/>
            <person name="Cassano S."/>
            <person name="Degen J."/>
            <person name="Kessler C."/>
            <person name="Blasi F."/>
            <person name="Rossi G."/>
        </authorList>
    </citation>
    <scope>SUBCELLULAR LOCATION</scope>
    <scope>INDUCTION</scope>
</reference>
<comment type="function">
    <text>Acts as a receptor for urokinase plasminogen activator. Plays a role in localizing and promoting plasmin formation. Mediates the proteolysis-independent signal transduction activation effects of U-PA.</text>
</comment>
<comment type="subunit">
    <text evidence="1 2 6">Monomer (Probable). Interacts (via the UPAR/Ly6 domains) with SRPX2. Interacts with MRC2 (By similarity). Interacts with SORL1 (via N-terminal ectodomain); this interaction decreases PLAUR internalization (By similarity). The ternary complex composed of PLAUR-PLAU-SERPINE1 also interacts with SORL1 (By similarity). Interacts with CD82; this interaction prevents PLAUR from binding to its high affinity ligand PLAU (By similarity).</text>
</comment>
<comment type="subcellular location">
    <molecule>Isoform 1</molecule>
    <subcellularLocation>
        <location evidence="4">Cell membrane</location>
        <topology evidence="4">Lipid-anchor</topology>
        <topology evidence="4">GPI-anchor</topology>
    </subcellularLocation>
</comment>
<comment type="subcellular location">
    <molecule>Isoform 2</molecule>
    <subcellularLocation>
        <location evidence="7">Secreted</location>
    </subcellularLocation>
</comment>
<comment type="alternative products">
    <event type="alternative splicing"/>
    <isoform>
        <id>P49616-1</id>
        <name>1</name>
        <name>GPI-anchored</name>
        <sequence type="displayed"/>
    </isoform>
    <isoform>
        <id>P49616-3</id>
        <id>P51573-1</id>
        <name>2</name>
        <name>Secreted</name>
        <sequence type="described" ref="VSP_031840 VSP_031841"/>
    </isoform>
</comment>
<comment type="induction">
    <text evidence="4">Up-regulated in transformed thyroid cell lines.</text>
</comment>
<comment type="miscellaneous">
    <molecule>Isoform 1</molecule>
    <text>GPI-anchored form.</text>
</comment>
<comment type="sequence caution" evidence="6">
    <conflict type="frameshift">
        <sequence resource="EMBL-CDS" id="CAA50717"/>
    </conflict>
</comment>
<comment type="sequence caution" evidence="6">
    <conflict type="frameshift">
        <sequence resource="EMBL-CDS" id="CAA50718"/>
    </conflict>
</comment>
<organism>
    <name type="scientific">Rattus norvegicus</name>
    <name type="common">Rat</name>
    <dbReference type="NCBI Taxonomy" id="10116"/>
    <lineage>
        <taxon>Eukaryota</taxon>
        <taxon>Metazoa</taxon>
        <taxon>Chordata</taxon>
        <taxon>Craniata</taxon>
        <taxon>Vertebrata</taxon>
        <taxon>Euteleostomi</taxon>
        <taxon>Mammalia</taxon>
        <taxon>Eutheria</taxon>
        <taxon>Euarchontoglires</taxon>
        <taxon>Glires</taxon>
        <taxon>Rodentia</taxon>
        <taxon>Myomorpha</taxon>
        <taxon>Muroidea</taxon>
        <taxon>Muridae</taxon>
        <taxon>Murinae</taxon>
        <taxon>Rattus</taxon>
    </lineage>
</organism>
<keyword id="KW-0025">Alternative splicing</keyword>
<keyword id="KW-1003">Cell membrane</keyword>
<keyword id="KW-1015">Disulfide bond</keyword>
<keyword id="KW-0325">Glycoprotein</keyword>
<keyword id="KW-0336">GPI-anchor</keyword>
<keyword id="KW-0449">Lipoprotein</keyword>
<keyword id="KW-0472">Membrane</keyword>
<keyword id="KW-0675">Receptor</keyword>
<keyword id="KW-1185">Reference proteome</keyword>
<keyword id="KW-0677">Repeat</keyword>
<keyword id="KW-0964">Secreted</keyword>
<keyword id="KW-0732">Signal</keyword>
<sequence>MGLLRRRLLLLVVVVTTCVPASQGLRCIQCESNQDCLVEECALGQDLCRTTVLREWEDAEELEVVTRGCAHKEKTNRTMSYRMGSVIVSLTETVCATNLCNRPRPGARGRPFPRGRYLECASCTSLDQSCERGREQSLQCRYPTEHCIEVVTLQSTERSVKDEPYTKGCGSLPGCPGTAGFHSNQTFHFLKCCNFTQCNGGPVLDLQSLPPNGFQCYSCEGNSTFGCSYEETSLIDCRGPMNQCLEATGLDVLGNRSYTVRGCATASWCQGSHVADSFQTHVNLSISCCNGSGCNRPTGGAPGPGPAHLILIASLLLTLRLWGIPLWT</sequence>
<accession>P49616</accession>
<accession>O35771</accession>
<accession>P51573</accession>
<accession>Q7TN35</accession>